<comment type="function">
    <text evidence="1">Catalyzes the dehydration of inosose (2-keto-myo-inositol, 2KMI or 2,4,6/3,5-pentahydroxycyclohexanone) to 3D-(3,5/4)-trihydroxycyclohexane-1,2-dione (D-2,3-diketo-4-deoxy-epi-inositol).</text>
</comment>
<comment type="catalytic activity">
    <reaction evidence="1">
        <text>scyllo-inosose = 3D-3,5/4-trihydroxycyclohexane-1,2-dione + H2O</text>
        <dbReference type="Rhea" id="RHEA:14065"/>
        <dbReference type="ChEBI" id="CHEBI:15377"/>
        <dbReference type="ChEBI" id="CHEBI:17811"/>
        <dbReference type="ChEBI" id="CHEBI:28446"/>
        <dbReference type="EC" id="4.2.1.44"/>
    </reaction>
</comment>
<comment type="cofactor">
    <cofactor evidence="1">
        <name>glutathione</name>
        <dbReference type="ChEBI" id="CHEBI:57925"/>
    </cofactor>
</comment>
<comment type="cofactor">
    <cofactor evidence="1">
        <name>Co(2+)</name>
        <dbReference type="ChEBI" id="CHEBI:48828"/>
    </cofactor>
    <cofactor evidence="1">
        <name>Mn(2+)</name>
        <dbReference type="ChEBI" id="CHEBI:29035"/>
    </cofactor>
</comment>
<comment type="similarity">
    <text evidence="1">Belongs to the IolE/MocC family.</text>
</comment>
<proteinExistence type="inferred from homology"/>
<evidence type="ECO:0000255" key="1">
    <source>
        <dbReference type="HAMAP-Rule" id="MF_01672"/>
    </source>
</evidence>
<dbReference type="EC" id="4.2.1.44" evidence="1"/>
<dbReference type="EMBL" id="CP000647">
    <property type="protein sequence ID" value="ABR80028.1"/>
    <property type="molecule type" value="Genomic_DNA"/>
</dbReference>
<dbReference type="RefSeq" id="WP_002886970.1">
    <property type="nucleotide sequence ID" value="NC_009648.1"/>
</dbReference>
<dbReference type="SMR" id="A6THJ4"/>
<dbReference type="STRING" id="272620.KPN_04677"/>
<dbReference type="jPOST" id="A6THJ4"/>
<dbReference type="PaxDb" id="272620-KPN_04677"/>
<dbReference type="EnsemblBacteria" id="ABR80028">
    <property type="protein sequence ID" value="ABR80028"/>
    <property type="gene ID" value="KPN_04677"/>
</dbReference>
<dbReference type="KEGG" id="kpn:KPN_04677"/>
<dbReference type="HOGENOM" id="CLU_059523_0_0_6"/>
<dbReference type="Proteomes" id="UP000000265">
    <property type="component" value="Chromosome"/>
</dbReference>
<dbReference type="GO" id="GO:0030145">
    <property type="term" value="F:manganese ion binding"/>
    <property type="evidence" value="ECO:0007669"/>
    <property type="project" value="UniProtKB-UniRule"/>
</dbReference>
<dbReference type="GO" id="GO:0050114">
    <property type="term" value="F:myo-inosose-2 dehydratase activity"/>
    <property type="evidence" value="ECO:0007669"/>
    <property type="project" value="UniProtKB-UniRule"/>
</dbReference>
<dbReference type="GO" id="GO:0019310">
    <property type="term" value="P:inositol catabolic process"/>
    <property type="evidence" value="ECO:0007669"/>
    <property type="project" value="UniProtKB-UniRule"/>
</dbReference>
<dbReference type="Gene3D" id="3.20.20.150">
    <property type="entry name" value="Divalent-metal-dependent TIM barrel enzymes"/>
    <property type="match status" value="1"/>
</dbReference>
<dbReference type="HAMAP" id="MF_01672">
    <property type="entry name" value="IolE"/>
    <property type="match status" value="1"/>
</dbReference>
<dbReference type="InterPro" id="IPR023952">
    <property type="entry name" value="IolE"/>
</dbReference>
<dbReference type="InterPro" id="IPR030823">
    <property type="entry name" value="IolE/MocC"/>
</dbReference>
<dbReference type="InterPro" id="IPR050312">
    <property type="entry name" value="IolE/XylAMocC-like"/>
</dbReference>
<dbReference type="InterPro" id="IPR036237">
    <property type="entry name" value="Xyl_isomerase-like_sf"/>
</dbReference>
<dbReference type="InterPro" id="IPR013022">
    <property type="entry name" value="Xyl_isomerase-like_TIM-brl"/>
</dbReference>
<dbReference type="NCBIfam" id="TIGR04379">
    <property type="entry name" value="myo_inos_iolE"/>
    <property type="match status" value="1"/>
</dbReference>
<dbReference type="PANTHER" id="PTHR12110">
    <property type="entry name" value="HYDROXYPYRUVATE ISOMERASE"/>
    <property type="match status" value="1"/>
</dbReference>
<dbReference type="PANTHER" id="PTHR12110:SF41">
    <property type="entry name" value="INOSOSE DEHYDRATASE"/>
    <property type="match status" value="1"/>
</dbReference>
<dbReference type="Pfam" id="PF01261">
    <property type="entry name" value="AP_endonuc_2"/>
    <property type="match status" value="1"/>
</dbReference>
<dbReference type="SUPFAM" id="SSF51658">
    <property type="entry name" value="Xylose isomerase-like"/>
    <property type="match status" value="1"/>
</dbReference>
<gene>
    <name evidence="1" type="primary">iolE</name>
    <name type="ordered locus">KPN78578_46040</name>
    <name type="ORF">KPN_04677</name>
</gene>
<reference key="1">
    <citation type="submission" date="2006-09" db="EMBL/GenBank/DDBJ databases">
        <authorList>
            <consortium name="The Klebsiella pneumonia Genome Sequencing Project"/>
            <person name="McClelland M."/>
            <person name="Sanderson E.K."/>
            <person name="Spieth J."/>
            <person name="Clifton W.S."/>
            <person name="Latreille P."/>
            <person name="Sabo A."/>
            <person name="Pepin K."/>
            <person name="Bhonagiri V."/>
            <person name="Porwollik S."/>
            <person name="Ali J."/>
            <person name="Wilson R.K."/>
        </authorList>
    </citation>
    <scope>NUCLEOTIDE SEQUENCE [LARGE SCALE GENOMIC DNA]</scope>
    <source>
        <strain>ATCC 700721 / MGH 78578</strain>
    </source>
</reference>
<organism>
    <name type="scientific">Klebsiella pneumoniae subsp. pneumoniae (strain ATCC 700721 / MGH 78578)</name>
    <dbReference type="NCBI Taxonomy" id="272620"/>
    <lineage>
        <taxon>Bacteria</taxon>
        <taxon>Pseudomonadati</taxon>
        <taxon>Pseudomonadota</taxon>
        <taxon>Gammaproteobacteria</taxon>
        <taxon>Enterobacterales</taxon>
        <taxon>Enterobacteriaceae</taxon>
        <taxon>Klebsiella/Raoultella group</taxon>
        <taxon>Klebsiella</taxon>
        <taxon>Klebsiella pneumoniae complex</taxon>
    </lineage>
</organism>
<accession>A6THJ4</accession>
<name>IOLE_KLEP7</name>
<sequence length="299" mass="33316">MNKDNVKLAIAPIGWTNDDMPELGSENTFQQIVSEMALAGFTGSEVGSKYPRDPAVLKPMLDIRGIQICNAWFSTFFANGQREKTIDEFVNHMNFLHAMGAKVIGCSEQSGSIQGLDKPILGDAKPCFSDEEWQRVAEGYNTLGRLAAEKGMQVCLHHHMGTGIQTTAEIDKFMSLVDERVFLLFDTGHAWYSEGGEAPMLAILKKYLPRINHVHLKDVRPPVIDQVRRDGLSFLDGVKKGTFTVPGDGVIDFRPVFKLLDDFGYKGWMVVEAEQDPALANPFEYAVKARKYIRETAGI</sequence>
<feature type="chain" id="PRO_0000352371" description="Inosose dehydratase">
    <location>
        <begin position="1"/>
        <end position="299"/>
    </location>
</feature>
<protein>
    <recommendedName>
        <fullName evidence="1">Inosose dehydratase</fullName>
        <ecNumber evidence="1">4.2.1.44</ecNumber>
    </recommendedName>
    <alternativeName>
        <fullName evidence="1">2-keto-myo-inositol dehydratase</fullName>
        <shortName evidence="1">2KMI dehydratase</shortName>
    </alternativeName>
</protein>
<keyword id="KW-0170">Cobalt</keyword>
<keyword id="KW-0456">Lyase</keyword>
<keyword id="KW-0464">Manganese</keyword>